<proteinExistence type="inferred from homology"/>
<comment type="function">
    <text evidence="1">Converts 2C-methyl-D-erythritol 2,4-cyclodiphosphate (ME-2,4cPP) into 1-hydroxy-2-methyl-2-(E)-butenyl 4-diphosphate.</text>
</comment>
<comment type="catalytic activity">
    <reaction evidence="1">
        <text>(2E)-4-hydroxy-3-methylbut-2-enyl diphosphate + oxidized [flavodoxin] + H2O + 2 H(+) = 2-C-methyl-D-erythritol 2,4-cyclic diphosphate + reduced [flavodoxin]</text>
        <dbReference type="Rhea" id="RHEA:43604"/>
        <dbReference type="Rhea" id="RHEA-COMP:10622"/>
        <dbReference type="Rhea" id="RHEA-COMP:10623"/>
        <dbReference type="ChEBI" id="CHEBI:15377"/>
        <dbReference type="ChEBI" id="CHEBI:15378"/>
        <dbReference type="ChEBI" id="CHEBI:57618"/>
        <dbReference type="ChEBI" id="CHEBI:58210"/>
        <dbReference type="ChEBI" id="CHEBI:58483"/>
        <dbReference type="ChEBI" id="CHEBI:128753"/>
        <dbReference type="EC" id="1.17.7.3"/>
    </reaction>
</comment>
<comment type="cofactor">
    <cofactor evidence="1">
        <name>[4Fe-4S] cluster</name>
        <dbReference type="ChEBI" id="CHEBI:49883"/>
    </cofactor>
    <text evidence="1">Binds 1 [4Fe-4S] cluster.</text>
</comment>
<comment type="pathway">
    <text evidence="1">Isoprenoid biosynthesis; isopentenyl diphosphate biosynthesis via DXP pathway; isopentenyl diphosphate from 1-deoxy-D-xylulose 5-phosphate: step 5/6.</text>
</comment>
<comment type="similarity">
    <text evidence="1">Belongs to the IspG family.</text>
</comment>
<name>ISPG_SALSV</name>
<organism>
    <name type="scientific">Salmonella schwarzengrund (strain CVM19633)</name>
    <dbReference type="NCBI Taxonomy" id="439843"/>
    <lineage>
        <taxon>Bacteria</taxon>
        <taxon>Pseudomonadati</taxon>
        <taxon>Pseudomonadota</taxon>
        <taxon>Gammaproteobacteria</taxon>
        <taxon>Enterobacterales</taxon>
        <taxon>Enterobacteriaceae</taxon>
        <taxon>Salmonella</taxon>
    </lineage>
</organism>
<gene>
    <name evidence="1" type="primary">ispG</name>
    <name type="ordered locus">SeSA_A2762</name>
</gene>
<dbReference type="EC" id="1.17.7.3" evidence="1"/>
<dbReference type="EMBL" id="CP001127">
    <property type="protein sequence ID" value="ACF90222.1"/>
    <property type="molecule type" value="Genomic_DNA"/>
</dbReference>
<dbReference type="RefSeq" id="WP_000551832.1">
    <property type="nucleotide sequence ID" value="NC_011094.1"/>
</dbReference>
<dbReference type="SMR" id="B4TR95"/>
<dbReference type="KEGG" id="sew:SeSA_A2762"/>
<dbReference type="HOGENOM" id="CLU_042258_0_0_6"/>
<dbReference type="UniPathway" id="UPA00056">
    <property type="reaction ID" value="UER00096"/>
</dbReference>
<dbReference type="Proteomes" id="UP000001865">
    <property type="component" value="Chromosome"/>
</dbReference>
<dbReference type="GO" id="GO:0051539">
    <property type="term" value="F:4 iron, 4 sulfur cluster binding"/>
    <property type="evidence" value="ECO:0007669"/>
    <property type="project" value="UniProtKB-UniRule"/>
</dbReference>
<dbReference type="GO" id="GO:0046429">
    <property type="term" value="F:4-hydroxy-3-methylbut-2-en-1-yl diphosphate synthase activity (ferredoxin)"/>
    <property type="evidence" value="ECO:0007669"/>
    <property type="project" value="UniProtKB-UniRule"/>
</dbReference>
<dbReference type="GO" id="GO:0141197">
    <property type="term" value="F:4-hydroxy-3-methylbut-2-enyl-diphosphate synthase activity (flavodoxin)"/>
    <property type="evidence" value="ECO:0007669"/>
    <property type="project" value="UniProtKB-EC"/>
</dbReference>
<dbReference type="GO" id="GO:0005506">
    <property type="term" value="F:iron ion binding"/>
    <property type="evidence" value="ECO:0007669"/>
    <property type="project" value="InterPro"/>
</dbReference>
<dbReference type="GO" id="GO:0019288">
    <property type="term" value="P:isopentenyl diphosphate biosynthetic process, methylerythritol 4-phosphate pathway"/>
    <property type="evidence" value="ECO:0007669"/>
    <property type="project" value="UniProtKB-UniRule"/>
</dbReference>
<dbReference type="GO" id="GO:0016114">
    <property type="term" value="P:terpenoid biosynthetic process"/>
    <property type="evidence" value="ECO:0007669"/>
    <property type="project" value="InterPro"/>
</dbReference>
<dbReference type="FunFam" id="3.20.20.20:FF:000001">
    <property type="entry name" value="4-hydroxy-3-methylbut-2-en-1-yl diphosphate synthase (flavodoxin)"/>
    <property type="match status" value="1"/>
</dbReference>
<dbReference type="FunFam" id="3.30.413.10:FF:000002">
    <property type="entry name" value="4-hydroxy-3-methylbut-2-en-1-yl diphosphate synthase (flavodoxin)"/>
    <property type="match status" value="1"/>
</dbReference>
<dbReference type="Gene3D" id="3.20.20.20">
    <property type="entry name" value="Dihydropteroate synthase-like"/>
    <property type="match status" value="1"/>
</dbReference>
<dbReference type="Gene3D" id="3.30.413.10">
    <property type="entry name" value="Sulfite Reductase Hemoprotein, domain 1"/>
    <property type="match status" value="1"/>
</dbReference>
<dbReference type="HAMAP" id="MF_00159">
    <property type="entry name" value="IspG"/>
    <property type="match status" value="1"/>
</dbReference>
<dbReference type="InterPro" id="IPR011005">
    <property type="entry name" value="Dihydropteroate_synth-like_sf"/>
</dbReference>
<dbReference type="InterPro" id="IPR016425">
    <property type="entry name" value="IspG_bac"/>
</dbReference>
<dbReference type="InterPro" id="IPR004588">
    <property type="entry name" value="IspG_bac-typ"/>
</dbReference>
<dbReference type="InterPro" id="IPR045854">
    <property type="entry name" value="NO2/SO3_Rdtase_4Fe4S_sf"/>
</dbReference>
<dbReference type="NCBIfam" id="TIGR00612">
    <property type="entry name" value="ispG_gcpE"/>
    <property type="match status" value="1"/>
</dbReference>
<dbReference type="NCBIfam" id="NF001540">
    <property type="entry name" value="PRK00366.1"/>
    <property type="match status" value="1"/>
</dbReference>
<dbReference type="PANTHER" id="PTHR30454">
    <property type="entry name" value="4-HYDROXY-3-METHYLBUT-2-EN-1-YL DIPHOSPHATE SYNTHASE"/>
    <property type="match status" value="1"/>
</dbReference>
<dbReference type="PANTHER" id="PTHR30454:SF0">
    <property type="entry name" value="4-HYDROXY-3-METHYLBUT-2-EN-1-YL DIPHOSPHATE SYNTHASE (FERREDOXIN), CHLOROPLASTIC"/>
    <property type="match status" value="1"/>
</dbReference>
<dbReference type="Pfam" id="PF04551">
    <property type="entry name" value="GcpE"/>
    <property type="match status" value="1"/>
</dbReference>
<dbReference type="PIRSF" id="PIRSF004640">
    <property type="entry name" value="IspG"/>
    <property type="match status" value="1"/>
</dbReference>
<dbReference type="SUPFAM" id="SSF51717">
    <property type="entry name" value="Dihydropteroate synthetase-like"/>
    <property type="match status" value="1"/>
</dbReference>
<dbReference type="SUPFAM" id="SSF56014">
    <property type="entry name" value="Nitrite and sulphite reductase 4Fe-4S domain-like"/>
    <property type="match status" value="1"/>
</dbReference>
<protein>
    <recommendedName>
        <fullName evidence="1">4-hydroxy-3-methylbut-2-en-1-yl diphosphate synthase (flavodoxin)</fullName>
        <ecNumber evidence="1">1.17.7.3</ecNumber>
    </recommendedName>
    <alternativeName>
        <fullName evidence="1">1-hydroxy-2-methyl-2-(E)-butenyl 4-diphosphate synthase</fullName>
    </alternativeName>
</protein>
<sequence>MHNQAPIQRRKSTRIYVGNVPIGDGAPITVQSMTNTRTTDVEATVNQIKALERVGADIVRVSVPTMDAAEAFKLIKQQVNVPLVADIHFDYRIALKVAEYGVDCLRINPGNIGNEERIRMVVDCARDKNIPIRIGVNAGSLEKDLQEKYGEPTPQALLESAMRHVDHLDRLNFDQFKVSVKASDVFLAVESYRLLAKQIDQPLHLGITEAGGARSGAVKSAIGLGLLLSEGIGDTLRVSLAADPVEEIKVGFDILKSLRIRARGINFIACPTCSRQEFDVIGTVNALEQRLEDIITPMDVSIIGCVVNGPGEALVSTLGVTGGNKKSGLYEDGVRKDRLDNDDMIAQLESRIRAKASQLDEARRIDVLQVEK</sequence>
<keyword id="KW-0004">4Fe-4S</keyword>
<keyword id="KW-0408">Iron</keyword>
<keyword id="KW-0411">Iron-sulfur</keyword>
<keyword id="KW-0414">Isoprene biosynthesis</keyword>
<keyword id="KW-0479">Metal-binding</keyword>
<keyword id="KW-0560">Oxidoreductase</keyword>
<accession>B4TR95</accession>
<reference key="1">
    <citation type="journal article" date="2011" name="J. Bacteriol.">
        <title>Comparative genomics of 28 Salmonella enterica isolates: evidence for CRISPR-mediated adaptive sublineage evolution.</title>
        <authorList>
            <person name="Fricke W.F."/>
            <person name="Mammel M.K."/>
            <person name="McDermott P.F."/>
            <person name="Tartera C."/>
            <person name="White D.G."/>
            <person name="Leclerc J.E."/>
            <person name="Ravel J."/>
            <person name="Cebula T.A."/>
        </authorList>
    </citation>
    <scope>NUCLEOTIDE SEQUENCE [LARGE SCALE GENOMIC DNA]</scope>
    <source>
        <strain>CVM19633</strain>
    </source>
</reference>
<feature type="chain" id="PRO_1000097185" description="4-hydroxy-3-methylbut-2-en-1-yl diphosphate synthase (flavodoxin)">
    <location>
        <begin position="1"/>
        <end position="372"/>
    </location>
</feature>
<feature type="binding site" evidence="1">
    <location>
        <position position="270"/>
    </location>
    <ligand>
        <name>[4Fe-4S] cluster</name>
        <dbReference type="ChEBI" id="CHEBI:49883"/>
    </ligand>
</feature>
<feature type="binding site" evidence="1">
    <location>
        <position position="273"/>
    </location>
    <ligand>
        <name>[4Fe-4S] cluster</name>
        <dbReference type="ChEBI" id="CHEBI:49883"/>
    </ligand>
</feature>
<feature type="binding site" evidence="1">
    <location>
        <position position="305"/>
    </location>
    <ligand>
        <name>[4Fe-4S] cluster</name>
        <dbReference type="ChEBI" id="CHEBI:49883"/>
    </ligand>
</feature>
<feature type="binding site" evidence="1">
    <location>
        <position position="312"/>
    </location>
    <ligand>
        <name>[4Fe-4S] cluster</name>
        <dbReference type="ChEBI" id="CHEBI:49883"/>
    </ligand>
</feature>
<evidence type="ECO:0000255" key="1">
    <source>
        <dbReference type="HAMAP-Rule" id="MF_00159"/>
    </source>
</evidence>